<accession>B8CMY7</accession>
<evidence type="ECO:0000255" key="1">
    <source>
        <dbReference type="HAMAP-Rule" id="MF_00274"/>
    </source>
</evidence>
<evidence type="ECO:0000256" key="2">
    <source>
        <dbReference type="SAM" id="MobiDB-lite"/>
    </source>
</evidence>
<proteinExistence type="inferred from homology"/>
<keyword id="KW-0963">Cytoplasm</keyword>
<keyword id="KW-0238">DNA-binding</keyword>
<protein>
    <recommendedName>
        <fullName evidence="1">Nucleoid-associated protein swp_1717</fullName>
    </recommendedName>
</protein>
<name>Y1717_SHEPW</name>
<organism>
    <name type="scientific">Shewanella piezotolerans (strain WP3 / JCM 13877)</name>
    <dbReference type="NCBI Taxonomy" id="225849"/>
    <lineage>
        <taxon>Bacteria</taxon>
        <taxon>Pseudomonadati</taxon>
        <taxon>Pseudomonadota</taxon>
        <taxon>Gammaproteobacteria</taxon>
        <taxon>Alteromonadales</taxon>
        <taxon>Shewanellaceae</taxon>
        <taxon>Shewanella</taxon>
    </lineage>
</organism>
<sequence length="109" mass="11847">MFGKGGMGNLMKQAQQMQDKMAKVQEEIARMEVTGEAGAGLVKVTMTGSHSVRKVDIDASLLEDDKEMLEDLIAAACNDAARRVEENQKDKMAEVTGGMQLPPGMKMPF</sequence>
<gene>
    <name type="ordered locus">swp_1717</name>
</gene>
<comment type="function">
    <text evidence="1">Binds to DNA and alters its conformation. May be involved in regulation of gene expression, nucleoid organization and DNA protection.</text>
</comment>
<comment type="subunit">
    <text evidence="1">Homodimer.</text>
</comment>
<comment type="subcellular location">
    <subcellularLocation>
        <location evidence="1">Cytoplasm</location>
        <location evidence="1">Nucleoid</location>
    </subcellularLocation>
</comment>
<comment type="similarity">
    <text evidence="1">Belongs to the YbaB/EbfC family.</text>
</comment>
<dbReference type="EMBL" id="CP000472">
    <property type="protein sequence ID" value="ACJ28489.1"/>
    <property type="molecule type" value="Genomic_DNA"/>
</dbReference>
<dbReference type="RefSeq" id="WP_020911867.1">
    <property type="nucleotide sequence ID" value="NC_011566.1"/>
</dbReference>
<dbReference type="SMR" id="B8CMY7"/>
<dbReference type="STRING" id="225849.swp_1717"/>
<dbReference type="KEGG" id="swp:swp_1717"/>
<dbReference type="eggNOG" id="COG0718">
    <property type="taxonomic scope" value="Bacteria"/>
</dbReference>
<dbReference type="HOGENOM" id="CLU_140930_0_0_6"/>
<dbReference type="OrthoDB" id="9808738at2"/>
<dbReference type="Proteomes" id="UP000000753">
    <property type="component" value="Chromosome"/>
</dbReference>
<dbReference type="GO" id="GO:0043590">
    <property type="term" value="C:bacterial nucleoid"/>
    <property type="evidence" value="ECO:0007669"/>
    <property type="project" value="UniProtKB-UniRule"/>
</dbReference>
<dbReference type="GO" id="GO:0005829">
    <property type="term" value="C:cytosol"/>
    <property type="evidence" value="ECO:0007669"/>
    <property type="project" value="TreeGrafter"/>
</dbReference>
<dbReference type="GO" id="GO:0003677">
    <property type="term" value="F:DNA binding"/>
    <property type="evidence" value="ECO:0007669"/>
    <property type="project" value="UniProtKB-UniRule"/>
</dbReference>
<dbReference type="FunFam" id="3.30.1310.10:FF:000001">
    <property type="entry name" value="Nucleoid-associated protein YbaB"/>
    <property type="match status" value="1"/>
</dbReference>
<dbReference type="Gene3D" id="3.30.1310.10">
    <property type="entry name" value="Nucleoid-associated protein YbaB-like domain"/>
    <property type="match status" value="1"/>
</dbReference>
<dbReference type="HAMAP" id="MF_00274">
    <property type="entry name" value="DNA_YbaB_EbfC"/>
    <property type="match status" value="1"/>
</dbReference>
<dbReference type="InterPro" id="IPR036894">
    <property type="entry name" value="YbaB-like_sf"/>
</dbReference>
<dbReference type="InterPro" id="IPR004401">
    <property type="entry name" value="YbaB/EbfC"/>
</dbReference>
<dbReference type="NCBIfam" id="TIGR00103">
    <property type="entry name" value="DNA_YbaB_EbfC"/>
    <property type="match status" value="1"/>
</dbReference>
<dbReference type="PANTHER" id="PTHR33449">
    <property type="entry name" value="NUCLEOID-ASSOCIATED PROTEIN YBAB"/>
    <property type="match status" value="1"/>
</dbReference>
<dbReference type="PANTHER" id="PTHR33449:SF1">
    <property type="entry name" value="NUCLEOID-ASSOCIATED PROTEIN YBAB"/>
    <property type="match status" value="1"/>
</dbReference>
<dbReference type="Pfam" id="PF02575">
    <property type="entry name" value="YbaB_DNA_bd"/>
    <property type="match status" value="1"/>
</dbReference>
<dbReference type="PIRSF" id="PIRSF004555">
    <property type="entry name" value="UCP004555"/>
    <property type="match status" value="1"/>
</dbReference>
<dbReference type="SUPFAM" id="SSF82607">
    <property type="entry name" value="YbaB-like"/>
    <property type="match status" value="1"/>
</dbReference>
<reference key="1">
    <citation type="journal article" date="2008" name="PLoS ONE">
        <title>Environmental adaptation: genomic analysis of the piezotolerant and psychrotolerant deep-sea iron reducing bacterium Shewanella piezotolerans WP3.</title>
        <authorList>
            <person name="Wang F."/>
            <person name="Wang J."/>
            <person name="Jian H."/>
            <person name="Zhang B."/>
            <person name="Li S."/>
            <person name="Wang F."/>
            <person name="Zeng X."/>
            <person name="Gao L."/>
            <person name="Bartlett D.H."/>
            <person name="Yu J."/>
            <person name="Hu S."/>
            <person name="Xiao X."/>
        </authorList>
    </citation>
    <scope>NUCLEOTIDE SEQUENCE [LARGE SCALE GENOMIC DNA]</scope>
    <source>
        <strain>WP3 / JCM 13877</strain>
    </source>
</reference>
<feature type="chain" id="PRO_1000119328" description="Nucleoid-associated protein swp_1717">
    <location>
        <begin position="1"/>
        <end position="109"/>
    </location>
</feature>
<feature type="region of interest" description="Disordered" evidence="2">
    <location>
        <begin position="88"/>
        <end position="109"/>
    </location>
</feature>